<protein>
    <recommendedName>
        <fullName evidence="1">Photosystem I assembly protein Ycf4</fullName>
    </recommendedName>
</protein>
<sequence length="188" mass="20535">MPSPVATVETDSLQQPILGSRRPSNYFWAIAVSVGGTGFLLAGLSSYLQVNLLPFSEPTRLAFLPQGLVMGLYGIAAILLASYLWFVISLDVGGGYNAFDRKTQKATIFRWGFPGKNRRVEITYPLSDIQAVRVDIKEGLNPKRALYLKVKGRGDVPLTRVGQPLPLTELESQGAELARFLAVPLEGL</sequence>
<feature type="chain" id="PRO_1000025953" description="Photosystem I assembly protein Ycf4">
    <location>
        <begin position="1"/>
        <end position="188"/>
    </location>
</feature>
<feature type="transmembrane region" description="Helical" evidence="1">
    <location>
        <begin position="26"/>
        <end position="46"/>
    </location>
</feature>
<feature type="transmembrane region" description="Helical" evidence="1">
    <location>
        <begin position="68"/>
        <end position="88"/>
    </location>
</feature>
<proteinExistence type="inferred from homology"/>
<accession>Q5N3Q6</accession>
<dbReference type="EMBL" id="AP008231">
    <property type="protein sequence ID" value="BAD79064.1"/>
    <property type="molecule type" value="Genomic_DNA"/>
</dbReference>
<dbReference type="RefSeq" id="WP_011243186.1">
    <property type="nucleotide sequence ID" value="NZ_CP085785.1"/>
</dbReference>
<dbReference type="SMR" id="Q5N3Q6"/>
<dbReference type="KEGG" id="syc:syc0874_d"/>
<dbReference type="eggNOG" id="ENOG502Z7YX">
    <property type="taxonomic scope" value="Bacteria"/>
</dbReference>
<dbReference type="Proteomes" id="UP000001175">
    <property type="component" value="Chromosome"/>
</dbReference>
<dbReference type="GO" id="GO:0009522">
    <property type="term" value="C:photosystem I"/>
    <property type="evidence" value="ECO:0007669"/>
    <property type="project" value="InterPro"/>
</dbReference>
<dbReference type="GO" id="GO:0031676">
    <property type="term" value="C:plasma membrane-derived thylakoid membrane"/>
    <property type="evidence" value="ECO:0007669"/>
    <property type="project" value="UniProtKB-SubCell"/>
</dbReference>
<dbReference type="GO" id="GO:0015979">
    <property type="term" value="P:photosynthesis"/>
    <property type="evidence" value="ECO:0007669"/>
    <property type="project" value="UniProtKB-UniRule"/>
</dbReference>
<dbReference type="HAMAP" id="MF_00437">
    <property type="entry name" value="Ycf4"/>
    <property type="match status" value="1"/>
</dbReference>
<dbReference type="InterPro" id="IPR003359">
    <property type="entry name" value="PSI_Ycf4_assembly"/>
</dbReference>
<dbReference type="NCBIfam" id="NF002712">
    <property type="entry name" value="PRK02542.1"/>
    <property type="match status" value="1"/>
</dbReference>
<dbReference type="PANTHER" id="PTHR33288">
    <property type="match status" value="1"/>
</dbReference>
<dbReference type="PANTHER" id="PTHR33288:SF4">
    <property type="entry name" value="PHOTOSYSTEM I ASSEMBLY PROTEIN YCF4"/>
    <property type="match status" value="1"/>
</dbReference>
<dbReference type="Pfam" id="PF02392">
    <property type="entry name" value="Ycf4"/>
    <property type="match status" value="1"/>
</dbReference>
<reference key="1">
    <citation type="journal article" date="2007" name="Photosyn. Res.">
        <title>Complete nucleotide sequence of the freshwater unicellular cyanobacterium Synechococcus elongatus PCC 6301 chromosome: gene content and organization.</title>
        <authorList>
            <person name="Sugita C."/>
            <person name="Ogata K."/>
            <person name="Shikata M."/>
            <person name="Jikuya H."/>
            <person name="Takano J."/>
            <person name="Furumichi M."/>
            <person name="Kanehisa M."/>
            <person name="Omata T."/>
            <person name="Sugiura M."/>
            <person name="Sugita M."/>
        </authorList>
    </citation>
    <scope>NUCLEOTIDE SEQUENCE [LARGE SCALE GENOMIC DNA]</scope>
    <source>
        <strain>ATCC 27144 / PCC 6301 / SAUG 1402/1</strain>
    </source>
</reference>
<organism>
    <name type="scientific">Synechococcus sp. (strain ATCC 27144 / PCC 6301 / SAUG 1402/1)</name>
    <name type="common">Anacystis nidulans</name>
    <dbReference type="NCBI Taxonomy" id="269084"/>
    <lineage>
        <taxon>Bacteria</taxon>
        <taxon>Bacillati</taxon>
        <taxon>Cyanobacteriota</taxon>
        <taxon>Cyanophyceae</taxon>
        <taxon>Synechococcales</taxon>
        <taxon>Synechococcaceae</taxon>
        <taxon>Synechococcus</taxon>
    </lineage>
</organism>
<name>YCF4_SYNP6</name>
<comment type="function">
    <text evidence="1">Seems to be required for the assembly of the photosystem I complex.</text>
</comment>
<comment type="subcellular location">
    <subcellularLocation>
        <location evidence="1">Cellular thylakoid membrane</location>
        <topology evidence="1">Multi-pass membrane protein</topology>
    </subcellularLocation>
</comment>
<comment type="similarity">
    <text evidence="1">Belongs to the Ycf4 family.</text>
</comment>
<keyword id="KW-0472">Membrane</keyword>
<keyword id="KW-0602">Photosynthesis</keyword>
<keyword id="KW-0793">Thylakoid</keyword>
<keyword id="KW-0812">Transmembrane</keyword>
<keyword id="KW-1133">Transmembrane helix</keyword>
<gene>
    <name evidence="1" type="primary">ycf4</name>
    <name type="ordered locus">syc0874_d</name>
</gene>
<evidence type="ECO:0000255" key="1">
    <source>
        <dbReference type="HAMAP-Rule" id="MF_00437"/>
    </source>
</evidence>